<organism>
    <name type="scientific">Arabidopsis thaliana</name>
    <name type="common">Mouse-ear cress</name>
    <dbReference type="NCBI Taxonomy" id="3702"/>
    <lineage>
        <taxon>Eukaryota</taxon>
        <taxon>Viridiplantae</taxon>
        <taxon>Streptophyta</taxon>
        <taxon>Embryophyta</taxon>
        <taxon>Tracheophyta</taxon>
        <taxon>Spermatophyta</taxon>
        <taxon>Magnoliopsida</taxon>
        <taxon>eudicotyledons</taxon>
        <taxon>Gunneridae</taxon>
        <taxon>Pentapetalae</taxon>
        <taxon>rosids</taxon>
        <taxon>malvids</taxon>
        <taxon>Brassicales</taxon>
        <taxon>Brassicaceae</taxon>
        <taxon>Camelineae</taxon>
        <taxon>Arabidopsis</taxon>
    </lineage>
</organism>
<keyword id="KW-1015">Disulfide bond</keyword>
<keyword id="KW-0325">Glycoprotein</keyword>
<keyword id="KW-0378">Hydrolase</keyword>
<keyword id="KW-0645">Protease</keyword>
<keyword id="KW-1185">Reference proteome</keyword>
<keyword id="KW-0732">Signal</keyword>
<keyword id="KW-0788">Thiol protease</keyword>
<keyword id="KW-0865">Zymogen</keyword>
<reference key="1">
    <citation type="journal article" date="2000" name="Nature">
        <title>Sequence and analysis of chromosome 3 of the plant Arabidopsis thaliana.</title>
        <authorList>
            <person name="Salanoubat M."/>
            <person name="Lemcke K."/>
            <person name="Rieger M."/>
            <person name="Ansorge W."/>
            <person name="Unseld M."/>
            <person name="Fartmann B."/>
            <person name="Valle G."/>
            <person name="Bloecker H."/>
            <person name="Perez-Alonso M."/>
            <person name="Obermaier B."/>
            <person name="Delseny M."/>
            <person name="Boutry M."/>
            <person name="Grivell L.A."/>
            <person name="Mache R."/>
            <person name="Puigdomenech P."/>
            <person name="De Simone V."/>
            <person name="Choisne N."/>
            <person name="Artiguenave F."/>
            <person name="Robert C."/>
            <person name="Brottier P."/>
            <person name="Wincker P."/>
            <person name="Cattolico L."/>
            <person name="Weissenbach J."/>
            <person name="Saurin W."/>
            <person name="Quetier F."/>
            <person name="Schaefer M."/>
            <person name="Mueller-Auer S."/>
            <person name="Gabel C."/>
            <person name="Fuchs M."/>
            <person name="Benes V."/>
            <person name="Wurmbach E."/>
            <person name="Drzonek H."/>
            <person name="Erfle H."/>
            <person name="Jordan N."/>
            <person name="Bangert S."/>
            <person name="Wiedelmann R."/>
            <person name="Kranz H."/>
            <person name="Voss H."/>
            <person name="Holland R."/>
            <person name="Brandt P."/>
            <person name="Nyakatura G."/>
            <person name="Vezzi A."/>
            <person name="D'Angelo M."/>
            <person name="Pallavicini A."/>
            <person name="Toppo S."/>
            <person name="Simionati B."/>
            <person name="Conrad A."/>
            <person name="Hornischer K."/>
            <person name="Kauer G."/>
            <person name="Loehnert T.-H."/>
            <person name="Nordsiek G."/>
            <person name="Reichelt J."/>
            <person name="Scharfe M."/>
            <person name="Schoen O."/>
            <person name="Bargues M."/>
            <person name="Terol J."/>
            <person name="Climent J."/>
            <person name="Navarro P."/>
            <person name="Collado C."/>
            <person name="Perez-Perez A."/>
            <person name="Ottenwaelder B."/>
            <person name="Duchemin D."/>
            <person name="Cooke R."/>
            <person name="Laudie M."/>
            <person name="Berger-Llauro C."/>
            <person name="Purnelle B."/>
            <person name="Masuy D."/>
            <person name="de Haan M."/>
            <person name="Maarse A.C."/>
            <person name="Alcaraz J.-P."/>
            <person name="Cottet A."/>
            <person name="Casacuberta E."/>
            <person name="Monfort A."/>
            <person name="Argiriou A."/>
            <person name="Flores M."/>
            <person name="Liguori R."/>
            <person name="Vitale D."/>
            <person name="Mannhaupt G."/>
            <person name="Haase D."/>
            <person name="Schoof H."/>
            <person name="Rudd S."/>
            <person name="Zaccaria P."/>
            <person name="Mewes H.-W."/>
            <person name="Mayer K.F.X."/>
            <person name="Kaul S."/>
            <person name="Town C.D."/>
            <person name="Koo H.L."/>
            <person name="Tallon L.J."/>
            <person name="Jenkins J."/>
            <person name="Rooney T."/>
            <person name="Rizzo M."/>
            <person name="Walts A."/>
            <person name="Utterback T."/>
            <person name="Fujii C.Y."/>
            <person name="Shea T.P."/>
            <person name="Creasy T.H."/>
            <person name="Haas B."/>
            <person name="Maiti R."/>
            <person name="Wu D."/>
            <person name="Peterson J."/>
            <person name="Van Aken S."/>
            <person name="Pai G."/>
            <person name="Militscher J."/>
            <person name="Sellers P."/>
            <person name="Gill J.E."/>
            <person name="Feldblyum T.V."/>
            <person name="Preuss D."/>
            <person name="Lin X."/>
            <person name="Nierman W.C."/>
            <person name="Salzberg S.L."/>
            <person name="White O."/>
            <person name="Venter J.C."/>
            <person name="Fraser C.M."/>
            <person name="Kaneko T."/>
            <person name="Nakamura Y."/>
            <person name="Sato S."/>
            <person name="Kato T."/>
            <person name="Asamizu E."/>
            <person name="Sasamoto S."/>
            <person name="Kimura T."/>
            <person name="Idesawa K."/>
            <person name="Kawashima K."/>
            <person name="Kishida Y."/>
            <person name="Kiyokawa C."/>
            <person name="Kohara M."/>
            <person name="Matsumoto M."/>
            <person name="Matsuno A."/>
            <person name="Muraki A."/>
            <person name="Nakayama S."/>
            <person name="Nakazaki N."/>
            <person name="Shinpo S."/>
            <person name="Takeuchi C."/>
            <person name="Wada T."/>
            <person name="Watanabe A."/>
            <person name="Yamada M."/>
            <person name="Yasuda M."/>
            <person name="Tabata S."/>
        </authorList>
    </citation>
    <scope>NUCLEOTIDE SEQUENCE [LARGE SCALE GENOMIC DNA]</scope>
    <source>
        <strain>cv. Columbia</strain>
    </source>
</reference>
<reference key="2">
    <citation type="journal article" date="2017" name="Plant J.">
        <title>Araport11: a complete reannotation of the Arabidopsis thaliana reference genome.</title>
        <authorList>
            <person name="Cheng C.Y."/>
            <person name="Krishnakumar V."/>
            <person name="Chan A.P."/>
            <person name="Thibaud-Nissen F."/>
            <person name="Schobel S."/>
            <person name="Town C.D."/>
        </authorList>
    </citation>
    <scope>GENOME REANNOTATION</scope>
    <source>
        <strain>cv. Columbia</strain>
    </source>
</reference>
<reference key="3">
    <citation type="journal article" date="2003" name="Science">
        <title>Empirical analysis of transcriptional activity in the Arabidopsis genome.</title>
        <authorList>
            <person name="Yamada K."/>
            <person name="Lim J."/>
            <person name="Dale J.M."/>
            <person name="Chen H."/>
            <person name="Shinn P."/>
            <person name="Palm C.J."/>
            <person name="Southwick A.M."/>
            <person name="Wu H.C."/>
            <person name="Kim C.J."/>
            <person name="Nguyen M."/>
            <person name="Pham P.K."/>
            <person name="Cheuk R.F."/>
            <person name="Karlin-Newmann G."/>
            <person name="Liu S.X."/>
            <person name="Lam B."/>
            <person name="Sakano H."/>
            <person name="Wu T."/>
            <person name="Yu G."/>
            <person name="Miranda M."/>
            <person name="Quach H.L."/>
            <person name="Tripp M."/>
            <person name="Chang C.H."/>
            <person name="Lee J.M."/>
            <person name="Toriumi M.J."/>
            <person name="Chan M.M."/>
            <person name="Tang C.C."/>
            <person name="Onodera C.S."/>
            <person name="Deng J.M."/>
            <person name="Akiyama K."/>
            <person name="Ansari Y."/>
            <person name="Arakawa T."/>
            <person name="Banh J."/>
            <person name="Banno F."/>
            <person name="Bowser L."/>
            <person name="Brooks S.Y."/>
            <person name="Carninci P."/>
            <person name="Chao Q."/>
            <person name="Choy N."/>
            <person name="Enju A."/>
            <person name="Goldsmith A.D."/>
            <person name="Gurjal M."/>
            <person name="Hansen N.F."/>
            <person name="Hayashizaki Y."/>
            <person name="Johnson-Hopson C."/>
            <person name="Hsuan V.W."/>
            <person name="Iida K."/>
            <person name="Karnes M."/>
            <person name="Khan S."/>
            <person name="Koesema E."/>
            <person name="Ishida J."/>
            <person name="Jiang P.X."/>
            <person name="Jones T."/>
            <person name="Kawai J."/>
            <person name="Kamiya A."/>
            <person name="Meyers C."/>
            <person name="Nakajima M."/>
            <person name="Narusaka M."/>
            <person name="Seki M."/>
            <person name="Sakurai T."/>
            <person name="Satou M."/>
            <person name="Tamse R."/>
            <person name="Vaysberg M."/>
            <person name="Wallender E.K."/>
            <person name="Wong C."/>
            <person name="Yamamura Y."/>
            <person name="Yuan S."/>
            <person name="Shinozaki K."/>
            <person name="Davis R.W."/>
            <person name="Theologis A."/>
            <person name="Ecker J.R."/>
        </authorList>
    </citation>
    <scope>NUCLEOTIDE SEQUENCE [LARGE SCALE MRNA]</scope>
    <source>
        <strain>cv. Columbia</strain>
    </source>
</reference>
<evidence type="ECO:0000250" key="1">
    <source>
        <dbReference type="UniProtKB" id="P00785"/>
    </source>
</evidence>
<evidence type="ECO:0000250" key="2">
    <source>
        <dbReference type="UniProtKB" id="P43297"/>
    </source>
</evidence>
<evidence type="ECO:0000250" key="3">
    <source>
        <dbReference type="UniProtKB" id="P80884"/>
    </source>
</evidence>
<evidence type="ECO:0000250" key="4">
    <source>
        <dbReference type="UniProtKB" id="P84346"/>
    </source>
</evidence>
<evidence type="ECO:0000255" key="5"/>
<evidence type="ECO:0000255" key="6">
    <source>
        <dbReference type="PROSITE-ProRule" id="PRU00498"/>
    </source>
</evidence>
<evidence type="ECO:0000255" key="7">
    <source>
        <dbReference type="PROSITE-ProRule" id="PRU10088"/>
    </source>
</evidence>
<evidence type="ECO:0000255" key="8">
    <source>
        <dbReference type="PROSITE-ProRule" id="PRU10089"/>
    </source>
</evidence>
<evidence type="ECO:0000255" key="9">
    <source>
        <dbReference type="PROSITE-ProRule" id="PRU10090"/>
    </source>
</evidence>
<evidence type="ECO:0000305" key="10"/>
<evidence type="ECO:0000312" key="11">
    <source>
        <dbReference type="Araport" id="AT3G54940"/>
    </source>
</evidence>
<evidence type="ECO:0000312" key="12">
    <source>
        <dbReference type="EMBL" id="CAB41090.1"/>
    </source>
</evidence>
<name>RD19D_ARATH</name>
<comment type="function">
    <text evidence="2">Probable thiol protease.</text>
</comment>
<comment type="similarity">
    <text evidence="10">Belongs to the peptidase C1 family.</text>
</comment>
<comment type="sequence caution" evidence="10">
    <conflict type="erroneous gene model prediction">
        <sequence resource="EMBL-CDS" id="CAB41090"/>
    </conflict>
</comment>
<sequence length="367" mass="40133">MVAKALAQLITCIILFCHVVASVEDLTIRQVTADNRRIRPNLLGTHTESKFRLFMSDYGKNYSTREEYIHRLGIFAKNVLKAAEHQMMDPSAVHGVTQFSDLTEEEFKRMYTGVADVGGSRGGTVGAEAPMVEVDGLPEDFDWREKGGVTEVKNQGACGSCWAFSTTGAAEGAHFVSTGKLLSLSEQQLVDCDQACDPKDKKACDNGCGGGLMTNAYEYLMEAGGLEEERSYPYTGKRGHCKFDPEKVAVRVLNFTTIPLDENQIAANLVRHGPLAVGLNAVFMQTYIGGVSCPLICSKRNVNHGVLLVGYGSKGFSILRLSNKPYWIIKNSWGKKWGENGYYKLCRGHDICGINSMVSAVATQVSS</sequence>
<proteinExistence type="evidence at transcript level"/>
<gene>
    <name evidence="10" type="primary">RD19D</name>
    <name evidence="11" type="ordered locus">At3g54940</name>
    <name evidence="12" type="ORF">F28P10.80</name>
</gene>
<feature type="signal peptide" evidence="5">
    <location>
        <begin position="1"/>
        <end position="22"/>
    </location>
</feature>
<feature type="propeptide" id="PRO_0000436326" description="Activation peptide" evidence="1">
    <location>
        <begin position="23"/>
        <end position="136"/>
    </location>
</feature>
<feature type="chain" id="PRO_5006529416" description="Probable cysteine protease RD19D">
    <location>
        <begin position="137"/>
        <end position="367"/>
    </location>
</feature>
<feature type="active site" evidence="7">
    <location>
        <position position="161"/>
    </location>
</feature>
<feature type="active site" evidence="8">
    <location>
        <position position="304"/>
    </location>
</feature>
<feature type="active site" evidence="9">
    <location>
        <position position="331"/>
    </location>
</feature>
<feature type="glycosylation site" description="N-linked (GlcNAc...) asparagine" evidence="6">
    <location>
        <position position="61"/>
    </location>
</feature>
<feature type="glycosylation site" description="N-linked (GlcNAc...) asparagine" evidence="6">
    <location>
        <position position="254"/>
    </location>
</feature>
<feature type="disulfide bond" evidence="4">
    <location>
        <begin position="158"/>
        <end position="208"/>
    </location>
</feature>
<feature type="disulfide bond" evidence="4">
    <location>
        <begin position="192"/>
        <end position="241"/>
    </location>
</feature>
<feature type="disulfide bond" evidence="4">
    <location>
        <begin position="297"/>
        <end position="352"/>
    </location>
</feature>
<accession>Q8VYS0</accession>
<accession>Q3EAJ4</accession>
<accession>Q9SV42</accession>
<dbReference type="EC" id="3.4.22.-" evidence="3"/>
<dbReference type="EMBL" id="AL049655">
    <property type="protein sequence ID" value="CAB41090.1"/>
    <property type="status" value="ALT_SEQ"/>
    <property type="molecule type" value="Genomic_DNA"/>
</dbReference>
<dbReference type="EMBL" id="CP002686">
    <property type="protein sequence ID" value="AEE79316.1"/>
    <property type="molecule type" value="Genomic_DNA"/>
</dbReference>
<dbReference type="EMBL" id="AY070063">
    <property type="protein sequence ID" value="AAL49820.1"/>
    <property type="molecule type" value="mRNA"/>
</dbReference>
<dbReference type="PIR" id="T06726">
    <property type="entry name" value="T06726"/>
</dbReference>
<dbReference type="RefSeq" id="NP_567010.5">
    <property type="nucleotide sequence ID" value="NM_115351.7"/>
</dbReference>
<dbReference type="SMR" id="Q8VYS0"/>
<dbReference type="FunCoup" id="Q8VYS0">
    <property type="interactions" value="422"/>
</dbReference>
<dbReference type="STRING" id="3702.Q8VYS0"/>
<dbReference type="MEROPS" id="C01.A05"/>
<dbReference type="GlyCosmos" id="Q8VYS0">
    <property type="glycosylation" value="2 sites, No reported glycans"/>
</dbReference>
<dbReference type="GlyGen" id="Q8VYS0">
    <property type="glycosylation" value="2 sites"/>
</dbReference>
<dbReference type="PaxDb" id="3702-AT3G54940.2"/>
<dbReference type="ProteomicsDB" id="225925"/>
<dbReference type="EnsemblPlants" id="AT3G54940.2">
    <property type="protein sequence ID" value="AT3G54940.2"/>
    <property type="gene ID" value="AT3G54940"/>
</dbReference>
<dbReference type="GeneID" id="824659"/>
<dbReference type="Gramene" id="AT3G54940.2">
    <property type="protein sequence ID" value="AT3G54940.2"/>
    <property type="gene ID" value="AT3G54940"/>
</dbReference>
<dbReference type="KEGG" id="ath:AT3G54940"/>
<dbReference type="Araport" id="AT3G54940"/>
<dbReference type="TAIR" id="AT3G54940"/>
<dbReference type="eggNOG" id="KOG1542">
    <property type="taxonomic scope" value="Eukaryota"/>
</dbReference>
<dbReference type="HOGENOM" id="CLU_012184_1_3_1"/>
<dbReference type="InParanoid" id="Q8VYS0"/>
<dbReference type="OMA" id="RSATPFW"/>
<dbReference type="OrthoDB" id="10253408at2759"/>
<dbReference type="PhylomeDB" id="Q8VYS0"/>
<dbReference type="PRO" id="PR:Q8VYS0"/>
<dbReference type="Proteomes" id="UP000006548">
    <property type="component" value="Chromosome 3"/>
</dbReference>
<dbReference type="ExpressionAtlas" id="Q8VYS0">
    <property type="expression patterns" value="baseline and differential"/>
</dbReference>
<dbReference type="GO" id="GO:0008234">
    <property type="term" value="F:cysteine-type peptidase activity"/>
    <property type="evidence" value="ECO:0007669"/>
    <property type="project" value="UniProtKB-KW"/>
</dbReference>
<dbReference type="GO" id="GO:0006508">
    <property type="term" value="P:proteolysis"/>
    <property type="evidence" value="ECO:0007669"/>
    <property type="project" value="UniProtKB-KW"/>
</dbReference>
<dbReference type="CDD" id="cd02248">
    <property type="entry name" value="Peptidase_C1A"/>
    <property type="match status" value="1"/>
</dbReference>
<dbReference type="FunFam" id="3.90.70.10:FF:000057">
    <property type="entry name" value="Cysteine protease RD19A"/>
    <property type="match status" value="1"/>
</dbReference>
<dbReference type="Gene3D" id="3.90.70.10">
    <property type="entry name" value="Cysteine proteinases"/>
    <property type="match status" value="1"/>
</dbReference>
<dbReference type="InterPro" id="IPR038765">
    <property type="entry name" value="Papain-like_cys_pep_sf"/>
</dbReference>
<dbReference type="InterPro" id="IPR025661">
    <property type="entry name" value="Pept_asp_AS"/>
</dbReference>
<dbReference type="InterPro" id="IPR000169">
    <property type="entry name" value="Pept_cys_AS"/>
</dbReference>
<dbReference type="InterPro" id="IPR025660">
    <property type="entry name" value="Pept_his_AS"/>
</dbReference>
<dbReference type="InterPro" id="IPR013128">
    <property type="entry name" value="Peptidase_C1A"/>
</dbReference>
<dbReference type="InterPro" id="IPR000668">
    <property type="entry name" value="Peptidase_C1A_C"/>
</dbReference>
<dbReference type="InterPro" id="IPR039417">
    <property type="entry name" value="Peptidase_C1A_papain-like"/>
</dbReference>
<dbReference type="InterPro" id="IPR013201">
    <property type="entry name" value="Prot_inhib_I29"/>
</dbReference>
<dbReference type="PANTHER" id="PTHR12411">
    <property type="entry name" value="CYSTEINE PROTEASE FAMILY C1-RELATED"/>
    <property type="match status" value="1"/>
</dbReference>
<dbReference type="Pfam" id="PF08246">
    <property type="entry name" value="Inhibitor_I29"/>
    <property type="match status" value="1"/>
</dbReference>
<dbReference type="Pfam" id="PF00112">
    <property type="entry name" value="Peptidase_C1"/>
    <property type="match status" value="1"/>
</dbReference>
<dbReference type="PRINTS" id="PR00705">
    <property type="entry name" value="PAPAIN"/>
</dbReference>
<dbReference type="SMART" id="SM00848">
    <property type="entry name" value="Inhibitor_I29"/>
    <property type="match status" value="1"/>
</dbReference>
<dbReference type="SMART" id="SM00645">
    <property type="entry name" value="Pept_C1"/>
    <property type="match status" value="1"/>
</dbReference>
<dbReference type="SUPFAM" id="SSF54001">
    <property type="entry name" value="Cysteine proteinases"/>
    <property type="match status" value="1"/>
</dbReference>
<dbReference type="PROSITE" id="PS00640">
    <property type="entry name" value="THIOL_PROTEASE_ASN"/>
    <property type="match status" value="1"/>
</dbReference>
<dbReference type="PROSITE" id="PS00139">
    <property type="entry name" value="THIOL_PROTEASE_CYS"/>
    <property type="match status" value="1"/>
</dbReference>
<dbReference type="PROSITE" id="PS00639">
    <property type="entry name" value="THIOL_PROTEASE_HIS"/>
    <property type="match status" value="1"/>
</dbReference>
<protein>
    <recommendedName>
        <fullName evidence="10">Probable cysteine protease RD19D</fullName>
        <ecNumber evidence="3">3.4.22.-</ecNumber>
    </recommendedName>
</protein>